<accession>P94353</accession>
<name>YXJJ_BACSU</name>
<feature type="chain" id="PRO_0000050037" description="Uncharacterized protein YxjJ">
    <location>
        <begin position="1"/>
        <end position="87"/>
    </location>
</feature>
<feature type="transmembrane region" description="Helical" evidence="1">
    <location>
        <begin position="25"/>
        <end position="47"/>
    </location>
</feature>
<gene>
    <name type="primary">yxjJ</name>
    <name type="ordered locus">BSU38930</name>
</gene>
<reference key="1">
    <citation type="journal article" date="1996" name="Microbiology">
        <title>Sequencing of a 65 kb region of the Bacillus subtilis genome containing the lic and cel loci, and creation of a 177 kb contig covering the gnt-sacXY region.</title>
        <authorList>
            <person name="Yoshida K."/>
            <person name="Shindo K."/>
            <person name="Sano H."/>
            <person name="Seki S."/>
            <person name="Fujimura M."/>
            <person name="Yanai N."/>
            <person name="Miwa Y."/>
            <person name="Fujita Y."/>
        </authorList>
    </citation>
    <scope>NUCLEOTIDE SEQUENCE [GENOMIC DNA]</scope>
    <source>
        <strain>168 / BGSC1A1</strain>
    </source>
</reference>
<reference key="2">
    <citation type="journal article" date="1997" name="Nature">
        <title>The complete genome sequence of the Gram-positive bacterium Bacillus subtilis.</title>
        <authorList>
            <person name="Kunst F."/>
            <person name="Ogasawara N."/>
            <person name="Moszer I."/>
            <person name="Albertini A.M."/>
            <person name="Alloni G."/>
            <person name="Azevedo V."/>
            <person name="Bertero M.G."/>
            <person name="Bessieres P."/>
            <person name="Bolotin A."/>
            <person name="Borchert S."/>
            <person name="Borriss R."/>
            <person name="Boursier L."/>
            <person name="Brans A."/>
            <person name="Braun M."/>
            <person name="Brignell S.C."/>
            <person name="Bron S."/>
            <person name="Brouillet S."/>
            <person name="Bruschi C.V."/>
            <person name="Caldwell B."/>
            <person name="Capuano V."/>
            <person name="Carter N.M."/>
            <person name="Choi S.-K."/>
            <person name="Codani J.-J."/>
            <person name="Connerton I.F."/>
            <person name="Cummings N.J."/>
            <person name="Daniel R.A."/>
            <person name="Denizot F."/>
            <person name="Devine K.M."/>
            <person name="Duesterhoeft A."/>
            <person name="Ehrlich S.D."/>
            <person name="Emmerson P.T."/>
            <person name="Entian K.-D."/>
            <person name="Errington J."/>
            <person name="Fabret C."/>
            <person name="Ferrari E."/>
            <person name="Foulger D."/>
            <person name="Fritz C."/>
            <person name="Fujita M."/>
            <person name="Fujita Y."/>
            <person name="Fuma S."/>
            <person name="Galizzi A."/>
            <person name="Galleron N."/>
            <person name="Ghim S.-Y."/>
            <person name="Glaser P."/>
            <person name="Goffeau A."/>
            <person name="Golightly E.J."/>
            <person name="Grandi G."/>
            <person name="Guiseppi G."/>
            <person name="Guy B.J."/>
            <person name="Haga K."/>
            <person name="Haiech J."/>
            <person name="Harwood C.R."/>
            <person name="Henaut A."/>
            <person name="Hilbert H."/>
            <person name="Holsappel S."/>
            <person name="Hosono S."/>
            <person name="Hullo M.-F."/>
            <person name="Itaya M."/>
            <person name="Jones L.-M."/>
            <person name="Joris B."/>
            <person name="Karamata D."/>
            <person name="Kasahara Y."/>
            <person name="Klaerr-Blanchard M."/>
            <person name="Klein C."/>
            <person name="Kobayashi Y."/>
            <person name="Koetter P."/>
            <person name="Koningstein G."/>
            <person name="Krogh S."/>
            <person name="Kumano M."/>
            <person name="Kurita K."/>
            <person name="Lapidus A."/>
            <person name="Lardinois S."/>
            <person name="Lauber J."/>
            <person name="Lazarevic V."/>
            <person name="Lee S.-M."/>
            <person name="Levine A."/>
            <person name="Liu H."/>
            <person name="Masuda S."/>
            <person name="Mauel C."/>
            <person name="Medigue C."/>
            <person name="Medina N."/>
            <person name="Mellado R.P."/>
            <person name="Mizuno M."/>
            <person name="Moestl D."/>
            <person name="Nakai S."/>
            <person name="Noback M."/>
            <person name="Noone D."/>
            <person name="O'Reilly M."/>
            <person name="Ogawa K."/>
            <person name="Ogiwara A."/>
            <person name="Oudega B."/>
            <person name="Park S.-H."/>
            <person name="Parro V."/>
            <person name="Pohl T.M."/>
            <person name="Portetelle D."/>
            <person name="Porwollik S."/>
            <person name="Prescott A.M."/>
            <person name="Presecan E."/>
            <person name="Pujic P."/>
            <person name="Purnelle B."/>
            <person name="Rapoport G."/>
            <person name="Rey M."/>
            <person name="Reynolds S."/>
            <person name="Rieger M."/>
            <person name="Rivolta C."/>
            <person name="Rocha E."/>
            <person name="Roche B."/>
            <person name="Rose M."/>
            <person name="Sadaie Y."/>
            <person name="Sato T."/>
            <person name="Scanlan E."/>
            <person name="Schleich S."/>
            <person name="Schroeter R."/>
            <person name="Scoffone F."/>
            <person name="Sekiguchi J."/>
            <person name="Sekowska A."/>
            <person name="Seror S.J."/>
            <person name="Serror P."/>
            <person name="Shin B.-S."/>
            <person name="Soldo B."/>
            <person name="Sorokin A."/>
            <person name="Tacconi E."/>
            <person name="Takagi T."/>
            <person name="Takahashi H."/>
            <person name="Takemaru K."/>
            <person name="Takeuchi M."/>
            <person name="Tamakoshi A."/>
            <person name="Tanaka T."/>
            <person name="Terpstra P."/>
            <person name="Tognoni A."/>
            <person name="Tosato V."/>
            <person name="Uchiyama S."/>
            <person name="Vandenbol M."/>
            <person name="Vannier F."/>
            <person name="Vassarotti A."/>
            <person name="Viari A."/>
            <person name="Wambutt R."/>
            <person name="Wedler E."/>
            <person name="Wedler H."/>
            <person name="Weitzenegger T."/>
            <person name="Winters P."/>
            <person name="Wipat A."/>
            <person name="Yamamoto H."/>
            <person name="Yamane K."/>
            <person name="Yasumoto K."/>
            <person name="Yata K."/>
            <person name="Yoshida K."/>
            <person name="Yoshikawa H.-F."/>
            <person name="Zumstein E."/>
            <person name="Yoshikawa H."/>
            <person name="Danchin A."/>
        </authorList>
    </citation>
    <scope>NUCLEOTIDE SEQUENCE [LARGE SCALE GENOMIC DNA]</scope>
    <source>
        <strain>168</strain>
    </source>
</reference>
<proteinExistence type="predicted"/>
<protein>
    <recommendedName>
        <fullName>Uncharacterized protein YxjJ</fullName>
    </recommendedName>
</protein>
<evidence type="ECO:0000255" key="1"/>
<evidence type="ECO:0000305" key="2"/>
<sequence length="87" mass="10553">MLFIDLEFFEYFLAFYPYNREYQNFFWEVCNMILFIIIALCGYLLFSFSKDNRRKPQKTSPLPAAAPHHNNLIDLDAIRQKRRMHLS</sequence>
<comment type="subcellular location">
    <subcellularLocation>
        <location evidence="2">Membrane</location>
        <topology evidence="2">Single-pass membrane protein</topology>
    </subcellularLocation>
</comment>
<organism>
    <name type="scientific">Bacillus subtilis (strain 168)</name>
    <dbReference type="NCBI Taxonomy" id="224308"/>
    <lineage>
        <taxon>Bacteria</taxon>
        <taxon>Bacillati</taxon>
        <taxon>Bacillota</taxon>
        <taxon>Bacilli</taxon>
        <taxon>Bacillales</taxon>
        <taxon>Bacillaceae</taxon>
        <taxon>Bacillus</taxon>
    </lineage>
</organism>
<dbReference type="EMBL" id="D83026">
    <property type="protein sequence ID" value="BAA11711.1"/>
    <property type="molecule type" value="Genomic_DNA"/>
</dbReference>
<dbReference type="EMBL" id="AL009126">
    <property type="protein sequence ID" value="CAB15919.1"/>
    <property type="molecule type" value="Genomic_DNA"/>
</dbReference>
<dbReference type="PIR" id="H70079">
    <property type="entry name" value="H70079"/>
</dbReference>
<dbReference type="RefSeq" id="NP_391772.1">
    <property type="nucleotide sequence ID" value="NC_000964.3"/>
</dbReference>
<dbReference type="RefSeq" id="WP_010886640.1">
    <property type="nucleotide sequence ID" value="NZ_OZ025638.1"/>
</dbReference>
<dbReference type="SMR" id="P94353"/>
<dbReference type="FunCoup" id="P94353">
    <property type="interactions" value="24"/>
</dbReference>
<dbReference type="PaxDb" id="224308-BSU38930"/>
<dbReference type="EnsemblBacteria" id="CAB15919">
    <property type="protein sequence ID" value="CAB15919"/>
    <property type="gene ID" value="BSU_38930"/>
</dbReference>
<dbReference type="GeneID" id="937454"/>
<dbReference type="KEGG" id="bsu:BSU38930"/>
<dbReference type="PATRIC" id="fig|224308.43.peg.4080"/>
<dbReference type="InParanoid" id="P94353"/>
<dbReference type="OrthoDB" id="2891462at2"/>
<dbReference type="BioCyc" id="BSUB:BSU38930-MONOMER"/>
<dbReference type="Proteomes" id="UP000001570">
    <property type="component" value="Chromosome"/>
</dbReference>
<dbReference type="GO" id="GO:0016020">
    <property type="term" value="C:membrane"/>
    <property type="evidence" value="ECO:0007669"/>
    <property type="project" value="UniProtKB-SubCell"/>
</dbReference>
<keyword id="KW-0472">Membrane</keyword>
<keyword id="KW-1185">Reference proteome</keyword>
<keyword id="KW-0812">Transmembrane</keyword>
<keyword id="KW-1133">Transmembrane helix</keyword>